<organism>
    <name type="scientific">Schizosaccharomyces pombe (strain 972 / ATCC 24843)</name>
    <name type="common">Fission yeast</name>
    <dbReference type="NCBI Taxonomy" id="284812"/>
    <lineage>
        <taxon>Eukaryota</taxon>
        <taxon>Fungi</taxon>
        <taxon>Dikarya</taxon>
        <taxon>Ascomycota</taxon>
        <taxon>Taphrinomycotina</taxon>
        <taxon>Schizosaccharomycetes</taxon>
        <taxon>Schizosaccharomycetales</taxon>
        <taxon>Schizosaccharomycetaceae</taxon>
        <taxon>Schizosaccharomyces</taxon>
    </lineage>
</organism>
<name>IF2A_SCHPO</name>
<protein>
    <recommendedName>
        <fullName>Eukaryotic translation initiation factor 2 subunit alpha</fullName>
        <shortName>eIF-2-alpha</shortName>
        <shortName>eIF-2A</shortName>
        <shortName>eIF-2alpha</shortName>
        <shortName>eIF2-alpha</shortName>
    </recommendedName>
</protein>
<proteinExistence type="evidence at protein level"/>
<gene>
    <name type="primary">tif211</name>
    <name type="ORF">SPAC3G9.09c</name>
</gene>
<sequence>MSTTSCRMYENRFPEVDELVVVNVRQIQEMGAYVKLLEYDNIEGMVLLSELSRRRIRSVQKHIRVGRNEVVVVLRVDKEKGYIDLSKRRVSPEDVVKCEERFNKSKAVHSIMRHIAEKHNVPLETMYTTIGWPLYRKYGHAYDAFKLAISNPDHVFEGLEPPKSGVINDLLAQISRRLTPQPIKIRADVEVTCFGYEGINAIKAALKAAEDVHTEEVPIKVKLVAPPLYVLLTNALDKSLGLKKLEEAIGAIEKSITASNGTCTVKMKPKAVSETDELELADLMKKFEKENAEISGDEEDDQSGSE</sequence>
<dbReference type="EMBL" id="CU329670">
    <property type="protein sequence ID" value="CAA15918.1"/>
    <property type="molecule type" value="Genomic_DNA"/>
</dbReference>
<dbReference type="PIR" id="T11645">
    <property type="entry name" value="T11645"/>
</dbReference>
<dbReference type="RefSeq" id="NP_594081.1">
    <property type="nucleotide sequence ID" value="NM_001019504.2"/>
</dbReference>
<dbReference type="SMR" id="P56286"/>
<dbReference type="BioGRID" id="279875">
    <property type="interactions" value="9"/>
</dbReference>
<dbReference type="DIP" id="DIP-61963N"/>
<dbReference type="FunCoup" id="P56286">
    <property type="interactions" value="786"/>
</dbReference>
<dbReference type="IntAct" id="P56286">
    <property type="interactions" value="3"/>
</dbReference>
<dbReference type="STRING" id="284812.P56286"/>
<dbReference type="iPTMnet" id="P56286"/>
<dbReference type="PaxDb" id="4896-SPAC3G9.09c.1"/>
<dbReference type="EnsemblFungi" id="SPAC3G9.09c.1">
    <property type="protein sequence ID" value="SPAC3G9.09c.1:pep"/>
    <property type="gene ID" value="SPAC3G9.09c"/>
</dbReference>
<dbReference type="GeneID" id="2543455"/>
<dbReference type="KEGG" id="spo:2543455"/>
<dbReference type="PomBase" id="SPAC3G9.09c">
    <property type="gene designation" value="tif211"/>
</dbReference>
<dbReference type="VEuPathDB" id="FungiDB:SPAC3G9.09c"/>
<dbReference type="eggNOG" id="KOG2916">
    <property type="taxonomic scope" value="Eukaryota"/>
</dbReference>
<dbReference type="HOGENOM" id="CLU_033458_0_1_1"/>
<dbReference type="InParanoid" id="P56286"/>
<dbReference type="OMA" id="DVNEHQR"/>
<dbReference type="PhylomeDB" id="P56286"/>
<dbReference type="Reactome" id="R-SPO-156827">
    <property type="pathway name" value="L13a-mediated translational silencing of Ceruloplasmin expression"/>
</dbReference>
<dbReference type="Reactome" id="R-SPO-382556">
    <property type="pathway name" value="ABC-family proteins mediated transport"/>
</dbReference>
<dbReference type="Reactome" id="R-SPO-72649">
    <property type="pathway name" value="Translation initiation complex formation"/>
</dbReference>
<dbReference type="Reactome" id="R-SPO-72695">
    <property type="pathway name" value="Formation of the ternary complex, and subsequently, the 43S complex"/>
</dbReference>
<dbReference type="Reactome" id="R-SPO-72702">
    <property type="pathway name" value="Ribosomal scanning and start codon recognition"/>
</dbReference>
<dbReference type="Reactome" id="R-SPO-72706">
    <property type="pathway name" value="GTP hydrolysis and joining of the 60S ribosomal subunit"/>
</dbReference>
<dbReference type="Reactome" id="R-SPO-72731">
    <property type="pathway name" value="Recycling of eIF2:GDP"/>
</dbReference>
<dbReference type="Reactome" id="R-SPO-9840373">
    <property type="pathway name" value="Cellular response to mitochondrial stress"/>
</dbReference>
<dbReference type="PRO" id="PR:P56286"/>
<dbReference type="Proteomes" id="UP000002485">
    <property type="component" value="Chromosome I"/>
</dbReference>
<dbReference type="GO" id="GO:0005829">
    <property type="term" value="C:cytosol"/>
    <property type="evidence" value="ECO:0007005"/>
    <property type="project" value="PomBase"/>
</dbReference>
<dbReference type="GO" id="GO:0033290">
    <property type="term" value="C:eukaryotic 48S preinitiation complex"/>
    <property type="evidence" value="ECO:0000318"/>
    <property type="project" value="GO_Central"/>
</dbReference>
<dbReference type="GO" id="GO:0005850">
    <property type="term" value="C:eukaryotic translation initiation factor 2 complex"/>
    <property type="evidence" value="ECO:0000250"/>
    <property type="project" value="UniProtKB"/>
</dbReference>
<dbReference type="GO" id="GO:1990624">
    <property type="term" value="F:guanyl nucleotide exchange factor inhibitor activity"/>
    <property type="evidence" value="ECO:0000304"/>
    <property type="project" value="PomBase"/>
</dbReference>
<dbReference type="GO" id="GO:1990856">
    <property type="term" value="F:methionyl-initiator methionine tRNA binding"/>
    <property type="evidence" value="ECO:0000304"/>
    <property type="project" value="PomBase"/>
</dbReference>
<dbReference type="GO" id="GO:0180014">
    <property type="term" value="F:protein-tRNA adaptor activity"/>
    <property type="evidence" value="ECO:0000304"/>
    <property type="project" value="PomBase"/>
</dbReference>
<dbReference type="GO" id="GO:0043022">
    <property type="term" value="F:ribosome binding"/>
    <property type="evidence" value="ECO:0000318"/>
    <property type="project" value="GO_Central"/>
</dbReference>
<dbReference type="GO" id="GO:0003743">
    <property type="term" value="F:translation initiation factor activity"/>
    <property type="evidence" value="ECO:0000318"/>
    <property type="project" value="GO_Central"/>
</dbReference>
<dbReference type="GO" id="GO:0002183">
    <property type="term" value="P:cytoplasmic translational initiation"/>
    <property type="evidence" value="ECO:0000266"/>
    <property type="project" value="PomBase"/>
</dbReference>
<dbReference type="GO" id="GO:0006413">
    <property type="term" value="P:translational initiation"/>
    <property type="evidence" value="ECO:0000318"/>
    <property type="project" value="GO_Central"/>
</dbReference>
<dbReference type="CDD" id="cd04452">
    <property type="entry name" value="S1_IF2_alpha"/>
    <property type="match status" value="1"/>
</dbReference>
<dbReference type="FunFam" id="3.30.70.1130:FF:000001">
    <property type="entry name" value="Eukaryotic translation initiation factor 2 subunit 1"/>
    <property type="match status" value="1"/>
</dbReference>
<dbReference type="FunFam" id="2.40.50.140:FF:000015">
    <property type="entry name" value="Eukaryotic translation initiation factor 2 subunit alpha"/>
    <property type="match status" value="1"/>
</dbReference>
<dbReference type="FunFam" id="1.10.150.190:FF:000002">
    <property type="entry name" value="Translation initiation factor 2, alpha subunit"/>
    <property type="match status" value="1"/>
</dbReference>
<dbReference type="Gene3D" id="3.30.70.1130">
    <property type="entry name" value="EIF_2_alpha"/>
    <property type="match status" value="1"/>
</dbReference>
<dbReference type="Gene3D" id="2.40.50.140">
    <property type="entry name" value="Nucleic acid-binding proteins"/>
    <property type="match status" value="1"/>
</dbReference>
<dbReference type="Gene3D" id="1.10.150.190">
    <property type="entry name" value="Translation initiation factor 2, subunit 1, domain 2"/>
    <property type="match status" value="1"/>
</dbReference>
<dbReference type="InterPro" id="IPR012340">
    <property type="entry name" value="NA-bd_OB-fold"/>
</dbReference>
<dbReference type="InterPro" id="IPR003029">
    <property type="entry name" value="S1_domain"/>
</dbReference>
<dbReference type="InterPro" id="IPR044126">
    <property type="entry name" value="S1_IF2_alpha"/>
</dbReference>
<dbReference type="InterPro" id="IPR024055">
    <property type="entry name" value="TIF2_asu_C"/>
</dbReference>
<dbReference type="InterPro" id="IPR024054">
    <property type="entry name" value="TIF2_asu_middle_sf"/>
</dbReference>
<dbReference type="InterPro" id="IPR011488">
    <property type="entry name" value="TIF_2_asu"/>
</dbReference>
<dbReference type="PANTHER" id="PTHR10602">
    <property type="entry name" value="EUKARYOTIC TRANSLATION INITIATION FACTOR 2 SUBUNIT 1"/>
    <property type="match status" value="1"/>
</dbReference>
<dbReference type="PANTHER" id="PTHR10602:SF0">
    <property type="entry name" value="EUKARYOTIC TRANSLATION INITIATION FACTOR 2 SUBUNIT 1"/>
    <property type="match status" value="1"/>
</dbReference>
<dbReference type="Pfam" id="PF07541">
    <property type="entry name" value="EIF_2_alpha"/>
    <property type="match status" value="1"/>
</dbReference>
<dbReference type="Pfam" id="PF00575">
    <property type="entry name" value="S1"/>
    <property type="match status" value="1"/>
</dbReference>
<dbReference type="SMART" id="SM00316">
    <property type="entry name" value="S1"/>
    <property type="match status" value="1"/>
</dbReference>
<dbReference type="SUPFAM" id="SSF110993">
    <property type="entry name" value="eIF-2-alpha, C-terminal domain"/>
    <property type="match status" value="1"/>
</dbReference>
<dbReference type="SUPFAM" id="SSF116742">
    <property type="entry name" value="eIF2alpha middle domain-like"/>
    <property type="match status" value="1"/>
</dbReference>
<dbReference type="SUPFAM" id="SSF50249">
    <property type="entry name" value="Nucleic acid-binding proteins"/>
    <property type="match status" value="1"/>
</dbReference>
<dbReference type="PROSITE" id="PS50126">
    <property type="entry name" value="S1"/>
    <property type="match status" value="1"/>
</dbReference>
<feature type="chain" id="PRO_0000137388" description="Eukaryotic translation initiation factor 2 subunit alpha">
    <location>
        <begin position="1"/>
        <end position="306"/>
    </location>
</feature>
<feature type="domain" description="S1 motif" evidence="3">
    <location>
        <begin position="17"/>
        <end position="88"/>
    </location>
</feature>
<feature type="modified residue" description="Phosphoserine" evidence="1">
    <location>
        <position position="52"/>
    </location>
</feature>
<feature type="modified residue" description="Phosphothreonine" evidence="5">
    <location>
        <position position="179"/>
    </location>
</feature>
<feature type="modified residue" description="Phosphoserine" evidence="5">
    <location>
        <position position="273"/>
    </location>
</feature>
<feature type="modified residue" description="Phosphoserine" evidence="5">
    <location>
        <position position="295"/>
    </location>
</feature>
<feature type="modified residue" description="Phosphoserine" evidence="5">
    <location>
        <position position="303"/>
    </location>
</feature>
<feature type="modified residue" description="Phosphoserine" evidence="5">
    <location>
        <position position="305"/>
    </location>
</feature>
<reference key="1">
    <citation type="journal article" date="2002" name="Nature">
        <title>The genome sequence of Schizosaccharomyces pombe.</title>
        <authorList>
            <person name="Wood V."/>
            <person name="Gwilliam R."/>
            <person name="Rajandream M.A."/>
            <person name="Lyne M.H."/>
            <person name="Lyne R."/>
            <person name="Stewart A."/>
            <person name="Sgouros J.G."/>
            <person name="Peat N."/>
            <person name="Hayles J."/>
            <person name="Baker S.G."/>
            <person name="Basham D."/>
            <person name="Bowman S."/>
            <person name="Brooks K."/>
            <person name="Brown D."/>
            <person name="Brown S."/>
            <person name="Chillingworth T."/>
            <person name="Churcher C.M."/>
            <person name="Collins M."/>
            <person name="Connor R."/>
            <person name="Cronin A."/>
            <person name="Davis P."/>
            <person name="Feltwell T."/>
            <person name="Fraser A."/>
            <person name="Gentles S."/>
            <person name="Goble A."/>
            <person name="Hamlin N."/>
            <person name="Harris D.E."/>
            <person name="Hidalgo J."/>
            <person name="Hodgson G."/>
            <person name="Holroyd S."/>
            <person name="Hornsby T."/>
            <person name="Howarth S."/>
            <person name="Huckle E.J."/>
            <person name="Hunt S."/>
            <person name="Jagels K."/>
            <person name="James K.D."/>
            <person name="Jones L."/>
            <person name="Jones M."/>
            <person name="Leather S."/>
            <person name="McDonald S."/>
            <person name="McLean J."/>
            <person name="Mooney P."/>
            <person name="Moule S."/>
            <person name="Mungall K.L."/>
            <person name="Murphy L.D."/>
            <person name="Niblett D."/>
            <person name="Odell C."/>
            <person name="Oliver K."/>
            <person name="O'Neil S."/>
            <person name="Pearson D."/>
            <person name="Quail M.A."/>
            <person name="Rabbinowitsch E."/>
            <person name="Rutherford K.M."/>
            <person name="Rutter S."/>
            <person name="Saunders D."/>
            <person name="Seeger K."/>
            <person name="Sharp S."/>
            <person name="Skelton J."/>
            <person name="Simmonds M.N."/>
            <person name="Squares R."/>
            <person name="Squares S."/>
            <person name="Stevens K."/>
            <person name="Taylor K."/>
            <person name="Taylor R.G."/>
            <person name="Tivey A."/>
            <person name="Walsh S.V."/>
            <person name="Warren T."/>
            <person name="Whitehead S."/>
            <person name="Woodward J.R."/>
            <person name="Volckaert G."/>
            <person name="Aert R."/>
            <person name="Robben J."/>
            <person name="Grymonprez B."/>
            <person name="Weltjens I."/>
            <person name="Vanstreels E."/>
            <person name="Rieger M."/>
            <person name="Schaefer M."/>
            <person name="Mueller-Auer S."/>
            <person name="Gabel C."/>
            <person name="Fuchs M."/>
            <person name="Duesterhoeft A."/>
            <person name="Fritzc C."/>
            <person name="Holzer E."/>
            <person name="Moestl D."/>
            <person name="Hilbert H."/>
            <person name="Borzym K."/>
            <person name="Langer I."/>
            <person name="Beck A."/>
            <person name="Lehrach H."/>
            <person name="Reinhardt R."/>
            <person name="Pohl T.M."/>
            <person name="Eger P."/>
            <person name="Zimmermann W."/>
            <person name="Wedler H."/>
            <person name="Wambutt R."/>
            <person name="Purnelle B."/>
            <person name="Goffeau A."/>
            <person name="Cadieu E."/>
            <person name="Dreano S."/>
            <person name="Gloux S."/>
            <person name="Lelaure V."/>
            <person name="Mottier S."/>
            <person name="Galibert F."/>
            <person name="Aves S.J."/>
            <person name="Xiang Z."/>
            <person name="Hunt C."/>
            <person name="Moore K."/>
            <person name="Hurst S.M."/>
            <person name="Lucas M."/>
            <person name="Rochet M."/>
            <person name="Gaillardin C."/>
            <person name="Tallada V.A."/>
            <person name="Garzon A."/>
            <person name="Thode G."/>
            <person name="Daga R.R."/>
            <person name="Cruzado L."/>
            <person name="Jimenez J."/>
            <person name="Sanchez M."/>
            <person name="del Rey F."/>
            <person name="Benito J."/>
            <person name="Dominguez A."/>
            <person name="Revuelta J.L."/>
            <person name="Moreno S."/>
            <person name="Armstrong J."/>
            <person name="Forsburg S.L."/>
            <person name="Cerutti L."/>
            <person name="Lowe T."/>
            <person name="McCombie W.R."/>
            <person name="Paulsen I."/>
            <person name="Potashkin J."/>
            <person name="Shpakovski G.V."/>
            <person name="Ussery D."/>
            <person name="Barrell B.G."/>
            <person name="Nurse P."/>
        </authorList>
    </citation>
    <scope>NUCLEOTIDE SEQUENCE [LARGE SCALE GENOMIC DNA]</scope>
    <source>
        <strain>972 / ATCC 24843</strain>
    </source>
</reference>
<reference key="2">
    <citation type="journal article" date="2006" name="Nat. Biotechnol.">
        <title>ORFeome cloning and global analysis of protein localization in the fission yeast Schizosaccharomyces pombe.</title>
        <authorList>
            <person name="Matsuyama A."/>
            <person name="Arai R."/>
            <person name="Yashiroda Y."/>
            <person name="Shirai A."/>
            <person name="Kamata A."/>
            <person name="Sekido S."/>
            <person name="Kobayashi Y."/>
            <person name="Hashimoto A."/>
            <person name="Hamamoto M."/>
            <person name="Hiraoka Y."/>
            <person name="Horinouchi S."/>
            <person name="Yoshida M."/>
        </authorList>
    </citation>
    <scope>SUBCELLULAR LOCATION</scope>
</reference>
<reference key="3">
    <citation type="journal article" date="2008" name="J. Proteome Res.">
        <title>Phosphoproteome analysis of fission yeast.</title>
        <authorList>
            <person name="Wilson-Grady J.T."/>
            <person name="Villen J."/>
            <person name="Gygi S.P."/>
        </authorList>
    </citation>
    <scope>PHOSPHORYLATION [LARGE SCALE ANALYSIS] AT THR-179; SER-273; SER-295; SER-303 AND SER-305</scope>
    <scope>IDENTIFICATION BY MASS SPECTROMETRY</scope>
</reference>
<evidence type="ECO:0000250" key="1"/>
<evidence type="ECO:0000250" key="2">
    <source>
        <dbReference type="UniProtKB" id="P20459"/>
    </source>
</evidence>
<evidence type="ECO:0000255" key="3">
    <source>
        <dbReference type="PROSITE-ProRule" id="PRU00180"/>
    </source>
</evidence>
<evidence type="ECO:0000269" key="4">
    <source>
    </source>
</evidence>
<evidence type="ECO:0000269" key="5">
    <source>
    </source>
</evidence>
<evidence type="ECO:0000305" key="6"/>
<keyword id="KW-0963">Cytoplasm</keyword>
<keyword id="KW-0396">Initiation factor</keyword>
<keyword id="KW-0597">Phosphoprotein</keyword>
<keyword id="KW-0648">Protein biosynthesis</keyword>
<keyword id="KW-1185">Reference proteome</keyword>
<keyword id="KW-0694">RNA-binding</keyword>
<comment type="function">
    <text evidence="6">eIF-2 functions in the early steps of protein synthesis by forming a ternary complex with GTP and initiator tRNA. This complex binds to a 40S ribosomal subunit, followed by mRNA binding to form a 43S pre-initiation complex. Junction of the 60S ribosomal subunit to form the 80S initiation complex is preceded by hydrolysis of the GTP bound to eIF-2 and release of an eIF-2-GDP binary complex. In order for eIF-2 to recycle and catalyze another round of initiation, the GDP bound to eIF-2 must exchange with GTP by way of a reaction catalyzed by eIF2B.</text>
</comment>
<comment type="subunit">
    <text evidence="2">Eukaryotic translation initiation factor 2 eIF2 is a heterotrimeric complex composed of an alpha, a beta and a gamma subunit.</text>
</comment>
<comment type="interaction">
    <interactant intactId="EBI-16198594">
        <id>P56286</id>
    </interactant>
    <interactant intactId="EBI-1793476">
        <id>Q9USP0</id>
        <label>gcn3</label>
    </interactant>
    <organismsDiffer>false</organismsDiffer>
    <experiments>2</experiments>
</comment>
<comment type="interaction">
    <interactant intactId="EBI-16198594">
        <id>P56286</id>
    </interactant>
    <interactant intactId="EBI-16198490">
        <id>Q9UT76</id>
        <label>tif222</label>
    </interactant>
    <organismsDiffer>false</organismsDiffer>
    <experiments>2</experiments>
</comment>
<comment type="subcellular location">
    <subcellularLocation>
        <location evidence="4">Cytoplasm</location>
        <location evidence="4">Cytosol</location>
    </subcellularLocation>
</comment>
<comment type="similarity">
    <text evidence="6">Belongs to the eIF-2-alpha family.</text>
</comment>
<accession>P56286</accession>